<dbReference type="EC" id="1.17.4.1"/>
<dbReference type="EMBL" id="BA000040">
    <property type="protein sequence ID" value="BAC49539.1"/>
    <property type="molecule type" value="Genomic_DNA"/>
</dbReference>
<dbReference type="RefSeq" id="NP_770914.1">
    <property type="nucleotide sequence ID" value="NC_004463.1"/>
</dbReference>
<dbReference type="RefSeq" id="WP_011087047.1">
    <property type="nucleotide sequence ID" value="NC_004463.1"/>
</dbReference>
<dbReference type="SMR" id="Q89MB9"/>
<dbReference type="STRING" id="224911.AAV28_18430"/>
<dbReference type="EnsemblBacteria" id="BAC49539">
    <property type="protein sequence ID" value="BAC49539"/>
    <property type="gene ID" value="BAC49539"/>
</dbReference>
<dbReference type="GeneID" id="46491270"/>
<dbReference type="KEGG" id="bja:bll4274"/>
<dbReference type="PATRIC" id="fig|224911.44.peg.4013"/>
<dbReference type="eggNOG" id="COG0209">
    <property type="taxonomic scope" value="Bacteria"/>
</dbReference>
<dbReference type="HOGENOM" id="CLU_000404_0_1_5"/>
<dbReference type="InParanoid" id="Q89MB9"/>
<dbReference type="OrthoDB" id="9762933at2"/>
<dbReference type="PhylomeDB" id="Q89MB9"/>
<dbReference type="Proteomes" id="UP000002526">
    <property type="component" value="Chromosome"/>
</dbReference>
<dbReference type="GO" id="GO:0031419">
    <property type="term" value="F:cobalamin binding"/>
    <property type="evidence" value="ECO:0007669"/>
    <property type="project" value="UniProtKB-KW"/>
</dbReference>
<dbReference type="GO" id="GO:0050897">
    <property type="term" value="F:cobalt ion binding"/>
    <property type="evidence" value="ECO:0007669"/>
    <property type="project" value="InterPro"/>
</dbReference>
<dbReference type="GO" id="GO:0000166">
    <property type="term" value="F:nucleotide binding"/>
    <property type="evidence" value="ECO:0007669"/>
    <property type="project" value="UniProtKB-KW"/>
</dbReference>
<dbReference type="GO" id="GO:0004748">
    <property type="term" value="F:ribonucleoside-diphosphate reductase activity, thioredoxin disulfide as acceptor"/>
    <property type="evidence" value="ECO:0000318"/>
    <property type="project" value="GO_Central"/>
</dbReference>
<dbReference type="GO" id="GO:0071897">
    <property type="term" value="P:DNA biosynthetic process"/>
    <property type="evidence" value="ECO:0007669"/>
    <property type="project" value="UniProtKB-KW"/>
</dbReference>
<dbReference type="CDD" id="cd02888">
    <property type="entry name" value="RNR_II_dimer"/>
    <property type="match status" value="1"/>
</dbReference>
<dbReference type="FunFam" id="3.20.70.20:FF:000015">
    <property type="entry name" value="Vitamin B12-dependent ribonucleotide reductase"/>
    <property type="match status" value="1"/>
</dbReference>
<dbReference type="FunFam" id="3.20.70.20:FF:000016">
    <property type="entry name" value="Vitamin B12-dependent ribonucleotide reductase"/>
    <property type="match status" value="1"/>
</dbReference>
<dbReference type="FunFam" id="3.20.70.20:FF:000017">
    <property type="entry name" value="Vitamin B12-dependent ribonucleotide reductase"/>
    <property type="match status" value="1"/>
</dbReference>
<dbReference type="Gene3D" id="3.20.70.20">
    <property type="match status" value="3"/>
</dbReference>
<dbReference type="InterPro" id="IPR050862">
    <property type="entry name" value="RdRp_reductase_class-2"/>
</dbReference>
<dbReference type="InterPro" id="IPR013678">
    <property type="entry name" value="RNR_2_N"/>
</dbReference>
<dbReference type="InterPro" id="IPR000788">
    <property type="entry name" value="RNR_lg_C"/>
</dbReference>
<dbReference type="InterPro" id="IPR013344">
    <property type="entry name" value="RNR_NrdJ/NrdZ"/>
</dbReference>
<dbReference type="InterPro" id="IPR024434">
    <property type="entry name" value="TSCPD_dom"/>
</dbReference>
<dbReference type="InterPro" id="IPR029072">
    <property type="entry name" value="YebC-like"/>
</dbReference>
<dbReference type="NCBIfam" id="TIGR02504">
    <property type="entry name" value="NrdJ_Z"/>
    <property type="match status" value="1"/>
</dbReference>
<dbReference type="NCBIfam" id="NF005736">
    <property type="entry name" value="PRK07562.1"/>
    <property type="match status" value="1"/>
</dbReference>
<dbReference type="PANTHER" id="PTHR43371:SF1">
    <property type="entry name" value="RIBONUCLEOSIDE-DIPHOSPHATE REDUCTASE"/>
    <property type="match status" value="1"/>
</dbReference>
<dbReference type="PANTHER" id="PTHR43371">
    <property type="entry name" value="VITAMIN B12-DEPENDENT RIBONUCLEOTIDE REDUCTASE"/>
    <property type="match status" value="1"/>
</dbReference>
<dbReference type="Pfam" id="PF08471">
    <property type="entry name" value="Ribonuc_red_2_N"/>
    <property type="match status" value="1"/>
</dbReference>
<dbReference type="Pfam" id="PF02867">
    <property type="entry name" value="Ribonuc_red_lgC"/>
    <property type="match status" value="2"/>
</dbReference>
<dbReference type="Pfam" id="PF12637">
    <property type="entry name" value="TSCPD"/>
    <property type="match status" value="1"/>
</dbReference>
<dbReference type="PRINTS" id="PR01183">
    <property type="entry name" value="RIBORDTASEM1"/>
</dbReference>
<dbReference type="SUPFAM" id="SSF51998">
    <property type="entry name" value="PFL-like glycyl radical enzymes"/>
    <property type="match status" value="1"/>
</dbReference>
<dbReference type="SUPFAM" id="SSF75625">
    <property type="entry name" value="YebC-like"/>
    <property type="match status" value="1"/>
</dbReference>
<gene>
    <name type="primary">nrdJ</name>
    <name type="ordered locus">bll4274</name>
</gene>
<organism>
    <name type="scientific">Bradyrhizobium diazoefficiens (strain JCM 10833 / BCRC 13528 / IAM 13628 / NBRC 14792 / USDA 110)</name>
    <dbReference type="NCBI Taxonomy" id="224911"/>
    <lineage>
        <taxon>Bacteria</taxon>
        <taxon>Pseudomonadati</taxon>
        <taxon>Pseudomonadota</taxon>
        <taxon>Alphaproteobacteria</taxon>
        <taxon>Hyphomicrobiales</taxon>
        <taxon>Nitrobacteraceae</taxon>
        <taxon>Bradyrhizobium</taxon>
    </lineage>
</organism>
<evidence type="ECO:0000250" key="1"/>
<evidence type="ECO:0000305" key="2"/>
<keyword id="KW-0846">Cobalamin</keyword>
<keyword id="KW-0170">Cobalt</keyword>
<keyword id="KW-1015">Disulfide bond</keyword>
<keyword id="KW-0237">DNA synthesis</keyword>
<keyword id="KW-0547">Nucleotide-binding</keyword>
<keyword id="KW-0560">Oxidoreductase</keyword>
<keyword id="KW-1185">Reference proteome</keyword>
<feature type="chain" id="PRO_0000231658" description="Vitamin B12-dependent ribonucleotide reductase">
    <location>
        <begin position="1"/>
        <end position="1254"/>
    </location>
</feature>
<feature type="active site" description="Proton acceptor" evidence="1">
    <location>
        <position position="474"/>
    </location>
</feature>
<feature type="active site" description="Cysteine radical intermediate" evidence="1">
    <location>
        <position position="476"/>
    </location>
</feature>
<feature type="active site" description="Proton acceptor" evidence="1">
    <location>
        <position position="478"/>
    </location>
</feature>
<feature type="binding site" evidence="1">
    <location>
        <position position="153"/>
    </location>
    <ligand>
        <name>substrate</name>
    </ligand>
</feature>
<feature type="binding site" evidence="1">
    <location>
        <begin position="198"/>
        <end position="199"/>
    </location>
    <ligand>
        <name>substrate</name>
    </ligand>
</feature>
<feature type="binding site" evidence="1">
    <location>
        <position position="230"/>
    </location>
    <ligand>
        <name>substrate</name>
    </ligand>
</feature>
<feature type="binding site" evidence="1">
    <location>
        <begin position="474"/>
        <end position="478"/>
    </location>
    <ligand>
        <name>substrate</name>
    </ligand>
</feature>
<feature type="binding site" evidence="1">
    <location>
        <begin position="675"/>
        <end position="679"/>
    </location>
    <ligand>
        <name>substrate</name>
    </ligand>
</feature>
<feature type="disulfide bond" description="Redox-active" evidence="1">
    <location>
        <begin position="199"/>
        <end position="487"/>
    </location>
</feature>
<sequence length="1254" mass="137465">MRIERRHTTTGQSPYAGIDFRLTTSEIRNPDGSVVFKLDNVEVPTEWSQVASDVLAQKYFRKAGVAARLKKVEEESVPSFLWRSVPDTEALSQLPEKERYVSELSAKQVFDRLAGCWTYWGWKGGYFTNDEDAQAFYDELRYMLAMQMVAPNSPQWFNTGLHWAYGIDGPGQGHYYVDPFTGKLTKSKSAYEHPQPHACFIQGVGDDLVNEGGIMDLWVREARLFKYGSGTGSNFSRLRGEGEKLSGGGRSSGLMSFLKIGDRAAGAIKSGGTTRRAAKMVVVDVDHPDIETYIDWKVKEEQKVAALVTGSKINQKHLKAVLKACVNCEGSGDDCFDPEKNPALRREIKLARRSLVPDNYIKRVIQFAKQGYKDIQFDVYDTDWDSEAYLTVSGQNSNNSVSLKDDFLRAVETDGDWNLNARTSKKVTKTLKARDLWEKIGYAAWASADPGLHFNTTMNDWHTCKASGDIRASNPCSEYMFLDDTACNLASANLLTFYNVATKHFDVEGYEHLCRLWTVVLEISVMMAQFPSKAIAELSYEFRTLGLGYANIGGLLMTMGLPYDSKEGRALCGALTAVMTGITYKTSAEIAAELGTFPGYKKNAAHMLRVIRNHRRAAHGQSNGYEALSVNPVPLDLVSCPQADLVSHAQAAWDAALELGEKHGYRNAQTTVIAPTGTIGLVMDCDTTGIEPDFALVKFKKLAGGGYFKIINRAVPAALRALGYRESEIAEIEAYAVGHGSLSNAPGINASTLKAKGFTDEAIAKVEKALPTAFDIKFAFNKWTFGEDFIRDQLGIGAEAIAAPGFDLLQAVGFTKREIEAANVHICGAMTVEGAPHLKAEHYPVFDCANPCGKIGKRYLSVESHIRMMAAAQPFISGAISKTINMPNDATVEDCKSAYMLSWKLALKANALYRDGSKLSQPLNSQLIADDEDEDDAVESLYEKPMAARTAQVSEKIVEKLVERIIVMREREKMPDRRKGYTQKAVVGGHKVYLRTGEYDDGRLGEIFIDMHKEGAALRSFINNFAIAVSLGLQYGVPLDEYVDAFTFTRFEPAGPVQGNDSIKYATSILDYVFRELAVSYMSRFDLAHVDPTESNFDALGKGVEEGKEPDEGHHASKLVSRGLTRSRTDNLVVMRGGSTAVAQGNDSAPSGGSKVTALASHGASARVGDVLEGAVALKQEVSHDLSPTEKLEALQWSKSGTAQTLVPSKAERRAEAKAKGYEGEMCSECGNFTLVRNGTCMKCDTCGSTTGCS</sequence>
<protein>
    <recommendedName>
        <fullName>Vitamin B12-dependent ribonucleotide reductase</fullName>
        <ecNumber>1.17.4.1</ecNumber>
    </recommendedName>
    <alternativeName>
        <fullName>Ribonucleoside-diphosphate reductase NrdJ</fullName>
    </alternativeName>
</protein>
<proteinExistence type="inferred from homology"/>
<reference key="1">
    <citation type="journal article" date="2002" name="DNA Res.">
        <title>Complete genomic sequence of nitrogen-fixing symbiotic bacterium Bradyrhizobium japonicum USDA110.</title>
        <authorList>
            <person name="Kaneko T."/>
            <person name="Nakamura Y."/>
            <person name="Sato S."/>
            <person name="Minamisawa K."/>
            <person name="Uchiumi T."/>
            <person name="Sasamoto S."/>
            <person name="Watanabe A."/>
            <person name="Idesawa K."/>
            <person name="Iriguchi M."/>
            <person name="Kawashima K."/>
            <person name="Kohara M."/>
            <person name="Matsumoto M."/>
            <person name="Shimpo S."/>
            <person name="Tsuruoka H."/>
            <person name="Wada T."/>
            <person name="Yamada M."/>
            <person name="Tabata S."/>
        </authorList>
    </citation>
    <scope>NUCLEOTIDE SEQUENCE [LARGE SCALE GENOMIC DNA]</scope>
    <source>
        <strain>JCM 10833 / BCRC 13528 / IAM 13628 / NBRC 14792 / USDA 110</strain>
    </source>
</reference>
<comment type="function">
    <text evidence="1">Catalyzes the reduction of ribonucleotides to deoxyribonucleotides. May function to provide a pool of deoxyribonucleotide precursors for DNA repair during oxygen limitation and/or for immediate growth after restoration of oxygen (By similarity).</text>
</comment>
<comment type="catalytic activity">
    <reaction>
        <text>a 2'-deoxyribonucleoside 5'-diphosphate + [thioredoxin]-disulfide + H2O = a ribonucleoside 5'-diphosphate + [thioredoxin]-dithiol</text>
        <dbReference type="Rhea" id="RHEA:23252"/>
        <dbReference type="Rhea" id="RHEA-COMP:10698"/>
        <dbReference type="Rhea" id="RHEA-COMP:10700"/>
        <dbReference type="ChEBI" id="CHEBI:15377"/>
        <dbReference type="ChEBI" id="CHEBI:29950"/>
        <dbReference type="ChEBI" id="CHEBI:50058"/>
        <dbReference type="ChEBI" id="CHEBI:57930"/>
        <dbReference type="ChEBI" id="CHEBI:73316"/>
        <dbReference type="EC" id="1.17.4.1"/>
    </reaction>
</comment>
<comment type="cofactor">
    <cofactor evidence="1">
        <name>adenosylcob(III)alamin</name>
        <dbReference type="ChEBI" id="CHEBI:18408"/>
    </cofactor>
    <text evidence="1">5'-deoxyadenosylcobalamine (coenzyme B12).</text>
</comment>
<comment type="similarity">
    <text evidence="2">Belongs to the ribonucleoside diphosphate reductase class-2 family.</text>
</comment>
<name>NRDJ_BRADU</name>
<accession>Q89MB9</accession>